<dbReference type="EC" id="2.7.11.1"/>
<dbReference type="EMBL" id="Z26878">
    <property type="protein sequence ID" value="CAA81516.1"/>
    <property type="molecule type" value="Genomic_DNA"/>
</dbReference>
<dbReference type="EMBL" id="Z28171">
    <property type="protein sequence ID" value="CAA82013.1"/>
    <property type="molecule type" value="Genomic_DNA"/>
</dbReference>
<dbReference type="EMBL" id="BK006944">
    <property type="protein sequence ID" value="DAA08995.1"/>
    <property type="molecule type" value="Genomic_DNA"/>
</dbReference>
<dbReference type="PIR" id="S38001">
    <property type="entry name" value="S38001"/>
</dbReference>
<dbReference type="RefSeq" id="NP_012750.1">
    <property type="nucleotide sequence ID" value="NM_001179737.1"/>
</dbReference>
<dbReference type="BioGRID" id="33967">
    <property type="interactions" value="227"/>
</dbReference>
<dbReference type="DIP" id="DIP-2877N"/>
<dbReference type="FunCoup" id="P36003">
    <property type="interactions" value="392"/>
</dbReference>
<dbReference type="IntAct" id="P36003">
    <property type="interactions" value="22"/>
</dbReference>
<dbReference type="MINT" id="P36003"/>
<dbReference type="STRING" id="4932.YKL171W"/>
<dbReference type="iPTMnet" id="P36003"/>
<dbReference type="PaxDb" id="4932-YKL171W"/>
<dbReference type="PeptideAtlas" id="P36003"/>
<dbReference type="EnsemblFungi" id="YKL171W_mRNA">
    <property type="protein sequence ID" value="YKL171W"/>
    <property type="gene ID" value="YKL171W"/>
</dbReference>
<dbReference type="GeneID" id="853683"/>
<dbReference type="KEGG" id="sce:YKL171W"/>
<dbReference type="AGR" id="SGD:S000001654"/>
<dbReference type="SGD" id="S000001654">
    <property type="gene designation" value="NNK1"/>
</dbReference>
<dbReference type="VEuPathDB" id="FungiDB:YKL171W"/>
<dbReference type="eggNOG" id="KOG0032">
    <property type="taxonomic scope" value="Eukaryota"/>
</dbReference>
<dbReference type="GeneTree" id="ENSGT00940000162886"/>
<dbReference type="HOGENOM" id="CLU_010370_0_0_1"/>
<dbReference type="InParanoid" id="P36003"/>
<dbReference type="OMA" id="YAMYCLT"/>
<dbReference type="OrthoDB" id="4062651at2759"/>
<dbReference type="BioCyc" id="YEAST:G3O-31938-MONOMER"/>
<dbReference type="BioGRID-ORCS" id="853683">
    <property type="hits" value="1 hit in 13 CRISPR screens"/>
</dbReference>
<dbReference type="PRO" id="PR:P36003"/>
<dbReference type="Proteomes" id="UP000002311">
    <property type="component" value="Chromosome XI"/>
</dbReference>
<dbReference type="RNAct" id="P36003">
    <property type="molecule type" value="protein"/>
</dbReference>
<dbReference type="GO" id="GO:0005737">
    <property type="term" value="C:cytoplasm"/>
    <property type="evidence" value="ECO:0000314"/>
    <property type="project" value="SGD"/>
</dbReference>
<dbReference type="GO" id="GO:0005634">
    <property type="term" value="C:nucleus"/>
    <property type="evidence" value="ECO:0000318"/>
    <property type="project" value="GO_Central"/>
</dbReference>
<dbReference type="GO" id="GO:0005524">
    <property type="term" value="F:ATP binding"/>
    <property type="evidence" value="ECO:0007669"/>
    <property type="project" value="UniProtKB-KW"/>
</dbReference>
<dbReference type="GO" id="GO:0009931">
    <property type="term" value="F:calcium-dependent protein serine/threonine kinase activity"/>
    <property type="evidence" value="ECO:0000318"/>
    <property type="project" value="GO_Central"/>
</dbReference>
<dbReference type="GO" id="GO:0004683">
    <property type="term" value="F:calcium/calmodulin-dependent protein kinase activity"/>
    <property type="evidence" value="ECO:0000318"/>
    <property type="project" value="GO_Central"/>
</dbReference>
<dbReference type="GO" id="GO:0005516">
    <property type="term" value="F:calmodulin binding"/>
    <property type="evidence" value="ECO:0000318"/>
    <property type="project" value="GO_Central"/>
</dbReference>
<dbReference type="GO" id="GO:0004672">
    <property type="term" value="F:protein kinase activity"/>
    <property type="evidence" value="ECO:0007005"/>
    <property type="project" value="SGD"/>
</dbReference>
<dbReference type="GO" id="GO:0106310">
    <property type="term" value="F:protein serine kinase activity"/>
    <property type="evidence" value="ECO:0007669"/>
    <property type="project" value="RHEA"/>
</dbReference>
<dbReference type="GO" id="GO:0035556">
    <property type="term" value="P:intracellular signal transduction"/>
    <property type="evidence" value="ECO:0000318"/>
    <property type="project" value="GO_Central"/>
</dbReference>
<dbReference type="GO" id="GO:0006508">
    <property type="term" value="P:proteolysis"/>
    <property type="evidence" value="ECO:0000315"/>
    <property type="project" value="SGD"/>
</dbReference>
<dbReference type="CDD" id="cd00180">
    <property type="entry name" value="PKc"/>
    <property type="match status" value="1"/>
</dbReference>
<dbReference type="FunFam" id="1.10.510.10:FF:001147">
    <property type="entry name" value="NNK1p Protein kinase"/>
    <property type="match status" value="1"/>
</dbReference>
<dbReference type="Gene3D" id="1.10.510.10">
    <property type="entry name" value="Transferase(Phosphotransferase) domain 1"/>
    <property type="match status" value="2"/>
</dbReference>
<dbReference type="InterPro" id="IPR050205">
    <property type="entry name" value="CDPK_Ser/Thr_kinases"/>
</dbReference>
<dbReference type="InterPro" id="IPR011009">
    <property type="entry name" value="Kinase-like_dom_sf"/>
</dbReference>
<dbReference type="InterPro" id="IPR016241">
    <property type="entry name" value="Nnk1"/>
</dbReference>
<dbReference type="InterPro" id="IPR000719">
    <property type="entry name" value="Prot_kinase_dom"/>
</dbReference>
<dbReference type="InterPro" id="IPR017441">
    <property type="entry name" value="Protein_kinase_ATP_BS"/>
</dbReference>
<dbReference type="InterPro" id="IPR008271">
    <property type="entry name" value="Ser/Thr_kinase_AS"/>
</dbReference>
<dbReference type="PANTHER" id="PTHR24349">
    <property type="entry name" value="SERINE/THREONINE-PROTEIN KINASE"/>
    <property type="match status" value="1"/>
</dbReference>
<dbReference type="Pfam" id="PF00069">
    <property type="entry name" value="Pkinase"/>
    <property type="match status" value="1"/>
</dbReference>
<dbReference type="PIRSF" id="PIRSF000610">
    <property type="entry name" value="Ser/Thr_PK_YKL171w_prd"/>
    <property type="match status" value="1"/>
</dbReference>
<dbReference type="SMART" id="SM00220">
    <property type="entry name" value="S_TKc"/>
    <property type="match status" value="1"/>
</dbReference>
<dbReference type="SUPFAM" id="SSF56112">
    <property type="entry name" value="Protein kinase-like (PK-like)"/>
    <property type="match status" value="1"/>
</dbReference>
<dbReference type="PROSITE" id="PS00107">
    <property type="entry name" value="PROTEIN_KINASE_ATP"/>
    <property type="match status" value="1"/>
</dbReference>
<dbReference type="PROSITE" id="PS50011">
    <property type="entry name" value="PROTEIN_KINASE_DOM"/>
    <property type="match status" value="1"/>
</dbReference>
<dbReference type="PROSITE" id="PS00108">
    <property type="entry name" value="PROTEIN_KINASE_ST"/>
    <property type="match status" value="1"/>
</dbReference>
<proteinExistence type="evidence at protein level"/>
<reference key="1">
    <citation type="journal article" date="1994" name="Yeast">
        <title>Sequencing and analysis of a 20.5 kb DNA segment located on the left arm of yeast chromosome XI.</title>
        <authorList>
            <person name="Vandenbol M."/>
            <person name="Bolle P.-A."/>
            <person name="Dion C."/>
            <person name="Portetelle D."/>
            <person name="Hilger F."/>
        </authorList>
    </citation>
    <scope>NUCLEOTIDE SEQUENCE [GENOMIC DNA]</scope>
    <source>
        <strain>ATCC 204508 / S288c</strain>
    </source>
</reference>
<reference key="2">
    <citation type="journal article" date="1994" name="Nature">
        <title>Complete DNA sequence of yeast chromosome XI.</title>
        <authorList>
            <person name="Dujon B."/>
            <person name="Alexandraki D."/>
            <person name="Andre B."/>
            <person name="Ansorge W."/>
            <person name="Baladron V."/>
            <person name="Ballesta J.P.G."/>
            <person name="Banrevi A."/>
            <person name="Bolle P.-A."/>
            <person name="Bolotin-Fukuhara M."/>
            <person name="Bossier P."/>
            <person name="Bou G."/>
            <person name="Boyer J."/>
            <person name="Buitrago M.J."/>
            <person name="Cheret G."/>
            <person name="Colleaux L."/>
            <person name="Daignan-Fornier B."/>
            <person name="del Rey F."/>
            <person name="Dion C."/>
            <person name="Domdey H."/>
            <person name="Duesterhoeft A."/>
            <person name="Duesterhus S."/>
            <person name="Entian K.-D."/>
            <person name="Erfle H."/>
            <person name="Esteban P.F."/>
            <person name="Feldmann H."/>
            <person name="Fernandes L."/>
            <person name="Fobo G.M."/>
            <person name="Fritz C."/>
            <person name="Fukuhara H."/>
            <person name="Gabel C."/>
            <person name="Gaillon L."/>
            <person name="Garcia-Cantalejo J.M."/>
            <person name="Garcia-Ramirez J.J."/>
            <person name="Gent M.E."/>
            <person name="Ghazvini M."/>
            <person name="Goffeau A."/>
            <person name="Gonzalez A."/>
            <person name="Grothues D."/>
            <person name="Guerreiro P."/>
            <person name="Hegemann J.H."/>
            <person name="Hewitt N."/>
            <person name="Hilger F."/>
            <person name="Hollenberg C.P."/>
            <person name="Horaitis O."/>
            <person name="Indge K.J."/>
            <person name="Jacquier A."/>
            <person name="James C.M."/>
            <person name="Jauniaux J.-C."/>
            <person name="Jimenez A."/>
            <person name="Keuchel H."/>
            <person name="Kirchrath L."/>
            <person name="Kleine K."/>
            <person name="Koetter P."/>
            <person name="Legrain P."/>
            <person name="Liebl S."/>
            <person name="Louis E.J."/>
            <person name="Maia e Silva A."/>
            <person name="Marck C."/>
            <person name="Monnier A.-L."/>
            <person name="Moestl D."/>
            <person name="Mueller S."/>
            <person name="Obermaier B."/>
            <person name="Oliver S.G."/>
            <person name="Pallier C."/>
            <person name="Pascolo S."/>
            <person name="Pfeiffer F."/>
            <person name="Philippsen P."/>
            <person name="Planta R.J."/>
            <person name="Pohl F.M."/>
            <person name="Pohl T.M."/>
            <person name="Poehlmann R."/>
            <person name="Portetelle D."/>
            <person name="Purnelle B."/>
            <person name="Puzos V."/>
            <person name="Ramezani Rad M."/>
            <person name="Rasmussen S.W."/>
            <person name="Remacha M.A."/>
            <person name="Revuelta J.L."/>
            <person name="Richard G.-F."/>
            <person name="Rieger M."/>
            <person name="Rodrigues-Pousada C."/>
            <person name="Rose M."/>
            <person name="Rupp T."/>
            <person name="Santos M.A."/>
            <person name="Schwager C."/>
            <person name="Sensen C."/>
            <person name="Skala J."/>
            <person name="Soares H."/>
            <person name="Sor F."/>
            <person name="Stegemann J."/>
            <person name="Tettelin H."/>
            <person name="Thierry A."/>
            <person name="Tzermia M."/>
            <person name="Urrestarazu L.A."/>
            <person name="van Dyck L."/>
            <person name="van Vliet-Reedijk J.C."/>
            <person name="Valens M."/>
            <person name="Vandenbol M."/>
            <person name="Vilela C."/>
            <person name="Vissers S."/>
            <person name="von Wettstein D."/>
            <person name="Voss H."/>
            <person name="Wiemann S."/>
            <person name="Xu G."/>
            <person name="Zimmermann J."/>
            <person name="Haasemann M."/>
            <person name="Becker I."/>
            <person name="Mewes H.-W."/>
        </authorList>
    </citation>
    <scope>NUCLEOTIDE SEQUENCE [LARGE SCALE GENOMIC DNA]</scope>
    <source>
        <strain>ATCC 204508 / S288c</strain>
    </source>
</reference>
<reference key="3">
    <citation type="journal article" date="2014" name="G3 (Bethesda)">
        <title>The reference genome sequence of Saccharomyces cerevisiae: Then and now.</title>
        <authorList>
            <person name="Engel S.R."/>
            <person name="Dietrich F.S."/>
            <person name="Fisk D.G."/>
            <person name="Binkley G."/>
            <person name="Balakrishnan R."/>
            <person name="Costanzo M.C."/>
            <person name="Dwight S.S."/>
            <person name="Hitz B.C."/>
            <person name="Karra K."/>
            <person name="Nash R.S."/>
            <person name="Weng S."/>
            <person name="Wong E.D."/>
            <person name="Lloyd P."/>
            <person name="Skrzypek M.S."/>
            <person name="Miyasato S.R."/>
            <person name="Simison M."/>
            <person name="Cherry J.M."/>
        </authorList>
    </citation>
    <scope>GENOME REANNOTATION</scope>
    <source>
        <strain>ATCC 204508 / S288c</strain>
    </source>
</reference>
<reference key="4">
    <citation type="journal article" date="2002" name="Genes Dev.">
        <title>Subcellular localization of the yeast proteome.</title>
        <authorList>
            <person name="Kumar A."/>
            <person name="Agarwal S."/>
            <person name="Heyman J.A."/>
            <person name="Matson S."/>
            <person name="Heidtman M."/>
            <person name="Piccirillo S."/>
            <person name="Umansky L."/>
            <person name="Drawid A."/>
            <person name="Jansen R."/>
            <person name="Liu Y."/>
            <person name="Cheung K.-H."/>
            <person name="Miller P."/>
            <person name="Gerstein M."/>
            <person name="Roeder G.S."/>
            <person name="Snyder M."/>
        </authorList>
    </citation>
    <scope>SUBCELLULAR LOCATION</scope>
</reference>
<reference key="5">
    <citation type="journal article" date="2007" name="Proteins">
        <title>Classification and functional annotation of eukaryotic protein kinases.</title>
        <authorList>
            <person name="Miranda-Saavedra D."/>
            <person name="Barton G.J."/>
        </authorList>
    </citation>
    <scope>PREDICTION OF FUNCTION</scope>
</reference>
<reference key="6">
    <citation type="journal article" date="2008" name="Mol. Cell. Proteomics">
        <title>A multidimensional chromatography technology for in-depth phosphoproteome analysis.</title>
        <authorList>
            <person name="Albuquerque C.P."/>
            <person name="Smolka M.B."/>
            <person name="Payne S.H."/>
            <person name="Bafna V."/>
            <person name="Eng J."/>
            <person name="Zhou H."/>
        </authorList>
    </citation>
    <scope>PHOSPHORYLATION [LARGE SCALE ANALYSIS] AT SER-737 AND TYR-739</scope>
    <scope>IDENTIFICATION BY MASS SPECTROMETRY [LARGE SCALE ANALYSIS]</scope>
</reference>
<reference key="7">
    <citation type="journal article" date="2009" name="Science">
        <title>Global analysis of Cdk1 substrate phosphorylation sites provides insights into evolution.</title>
        <authorList>
            <person name="Holt L.J."/>
            <person name="Tuch B.B."/>
            <person name="Villen J."/>
            <person name="Johnson A.D."/>
            <person name="Gygi S.P."/>
            <person name="Morgan D.O."/>
        </authorList>
    </citation>
    <scope>PHOSPHORYLATION [LARGE SCALE ANALYSIS] AT SER-178; SER-179; SER-405; SER-426; SER-737 AND TYR-739</scope>
    <scope>IDENTIFICATION BY MASS SPECTROMETRY [LARGE SCALE ANALYSIS]</scope>
</reference>
<reference key="8">
    <citation type="journal article" date="2010" name="Science">
        <title>A global protein kinase and phosphatase interaction network in yeast.</title>
        <authorList>
            <person name="Breitkreutz A."/>
            <person name="Choi H."/>
            <person name="Sharom J.R."/>
            <person name="Boucher L."/>
            <person name="Neduva V."/>
            <person name="Larsen B."/>
            <person name="Lin Z.Y."/>
            <person name="Breitkreutz B.J."/>
            <person name="Stark C."/>
            <person name="Liu G."/>
            <person name="Ahn J."/>
            <person name="Dewar-Darch D."/>
            <person name="Reguly T."/>
            <person name="Tang X."/>
            <person name="Almeida R."/>
            <person name="Qin Z.S."/>
            <person name="Pawson T."/>
            <person name="Gingras A.C."/>
            <person name="Nesvizhskii A.I."/>
            <person name="Tyers M."/>
        </authorList>
    </citation>
    <scope>FUNCTION</scope>
    <scope>INTERACTION WITH URE2; GDH2 AND THE TORC1 COMPLEX</scope>
</reference>
<accession>P36003</accession>
<accession>D6VX29</accession>
<feature type="chain" id="PRO_0000086152" description="Nitrogen network kinase 1">
    <location>
        <begin position="1"/>
        <end position="928"/>
    </location>
</feature>
<feature type="domain" description="Protein kinase" evidence="1">
    <location>
        <begin position="449"/>
        <end position="912"/>
    </location>
</feature>
<feature type="region of interest" description="Disordered" evidence="3">
    <location>
        <begin position="1"/>
        <end position="43"/>
    </location>
</feature>
<feature type="region of interest" description="Disordered" evidence="3">
    <location>
        <begin position="81"/>
        <end position="118"/>
    </location>
</feature>
<feature type="region of interest" description="Disordered" evidence="3">
    <location>
        <begin position="374"/>
        <end position="394"/>
    </location>
</feature>
<feature type="region of interest" description="Disordered" evidence="3">
    <location>
        <begin position="670"/>
        <end position="741"/>
    </location>
</feature>
<feature type="region of interest" description="Disordered" evidence="3">
    <location>
        <begin position="767"/>
        <end position="813"/>
    </location>
</feature>
<feature type="compositionally biased region" description="Polar residues" evidence="3">
    <location>
        <begin position="1"/>
        <end position="12"/>
    </location>
</feature>
<feature type="compositionally biased region" description="Low complexity" evidence="3">
    <location>
        <begin position="13"/>
        <end position="29"/>
    </location>
</feature>
<feature type="compositionally biased region" description="Polar residues" evidence="3">
    <location>
        <begin position="30"/>
        <end position="40"/>
    </location>
</feature>
<feature type="compositionally biased region" description="Polar residues" evidence="3">
    <location>
        <begin position="86"/>
        <end position="107"/>
    </location>
</feature>
<feature type="compositionally biased region" description="Low complexity" evidence="3">
    <location>
        <begin position="375"/>
        <end position="391"/>
    </location>
</feature>
<feature type="compositionally biased region" description="Polar residues" evidence="3">
    <location>
        <begin position="683"/>
        <end position="696"/>
    </location>
</feature>
<feature type="compositionally biased region" description="Low complexity" evidence="3">
    <location>
        <begin position="769"/>
        <end position="813"/>
    </location>
</feature>
<feature type="active site" description="Proton acceptor" evidence="1 2">
    <location>
        <position position="580"/>
    </location>
</feature>
<feature type="binding site" evidence="1">
    <location>
        <begin position="455"/>
        <end position="463"/>
    </location>
    <ligand>
        <name>ATP</name>
        <dbReference type="ChEBI" id="CHEBI:30616"/>
    </ligand>
</feature>
<feature type="binding site" evidence="1">
    <location>
        <position position="478"/>
    </location>
    <ligand>
        <name>ATP</name>
        <dbReference type="ChEBI" id="CHEBI:30616"/>
    </ligand>
</feature>
<feature type="modified residue" description="Phosphoserine" evidence="7">
    <location>
        <position position="178"/>
    </location>
</feature>
<feature type="modified residue" description="Phosphoserine" evidence="7">
    <location>
        <position position="179"/>
    </location>
</feature>
<feature type="modified residue" description="Phosphoserine" evidence="7">
    <location>
        <position position="405"/>
    </location>
</feature>
<feature type="modified residue" description="Phosphoserine" evidence="7">
    <location>
        <position position="426"/>
    </location>
</feature>
<feature type="modified residue" description="Phosphoserine" evidence="6 7">
    <location>
        <position position="737"/>
    </location>
</feature>
<feature type="modified residue" description="Phosphotyrosine" evidence="6 7">
    <location>
        <position position="739"/>
    </location>
</feature>
<comment type="function">
    <text evidence="5">Serine/threonine-protein kinase involved in the phosphorylation of the NAD(+)-dependent glutamate dehydrogenase GDH2. When overexpressed, confers hypersensitivity to rapamycin and induces rapid nuclear accumulation of GLN3 to activate the transcription of nitrogen-regulated genes.</text>
</comment>
<comment type="catalytic activity">
    <reaction>
        <text>L-seryl-[protein] + ATP = O-phospho-L-seryl-[protein] + ADP + H(+)</text>
        <dbReference type="Rhea" id="RHEA:17989"/>
        <dbReference type="Rhea" id="RHEA-COMP:9863"/>
        <dbReference type="Rhea" id="RHEA-COMP:11604"/>
        <dbReference type="ChEBI" id="CHEBI:15378"/>
        <dbReference type="ChEBI" id="CHEBI:29999"/>
        <dbReference type="ChEBI" id="CHEBI:30616"/>
        <dbReference type="ChEBI" id="CHEBI:83421"/>
        <dbReference type="ChEBI" id="CHEBI:456216"/>
        <dbReference type="EC" id="2.7.11.1"/>
    </reaction>
</comment>
<comment type="catalytic activity">
    <reaction>
        <text>L-threonyl-[protein] + ATP = O-phospho-L-threonyl-[protein] + ADP + H(+)</text>
        <dbReference type="Rhea" id="RHEA:46608"/>
        <dbReference type="Rhea" id="RHEA-COMP:11060"/>
        <dbReference type="Rhea" id="RHEA-COMP:11605"/>
        <dbReference type="ChEBI" id="CHEBI:15378"/>
        <dbReference type="ChEBI" id="CHEBI:30013"/>
        <dbReference type="ChEBI" id="CHEBI:30616"/>
        <dbReference type="ChEBI" id="CHEBI:61977"/>
        <dbReference type="ChEBI" id="CHEBI:456216"/>
        <dbReference type="EC" id="2.7.11.1"/>
    </reaction>
</comment>
<comment type="subunit">
    <text evidence="5">Interacts with URE2 and GDH2. Also interacts with the TORC1 kinase complex.</text>
</comment>
<comment type="interaction">
    <interactant intactId="EBI-9796">
        <id>P36003</id>
    </interactant>
    <interactant intactId="EBI-5815">
        <id>P33327</id>
        <label>GDH2</label>
    </interactant>
    <organismsDiffer>false</organismsDiffer>
    <experiments>4</experiments>
</comment>
<comment type="interaction">
    <interactant intactId="EBI-9796">
        <id>P36003</id>
    </interactant>
    <interactant intactId="EBI-8536">
        <id>P29295</id>
        <label>HRR25</label>
    </interactant>
    <organismsDiffer>false</organismsDiffer>
    <experiments>4</experiments>
</comment>
<comment type="interaction">
    <interactant intactId="EBI-9796">
        <id>P36003</id>
    </interactant>
    <interactant intactId="EBI-19374">
        <id>P35169</id>
        <label>TOR1</label>
    </interactant>
    <organismsDiffer>false</organismsDiffer>
    <experiments>3</experiments>
</comment>
<comment type="interaction">
    <interactant intactId="EBI-9796">
        <id>P36003</id>
    </interactant>
    <interactant intactId="EBI-20138">
        <id>P23202</id>
        <label>URE2</label>
    </interactant>
    <organismsDiffer>false</organismsDiffer>
    <experiments>4</experiments>
</comment>
<comment type="subcellular location">
    <subcellularLocation>
        <location evidence="4">Cytoplasm</location>
    </subcellularLocation>
</comment>
<comment type="similarity">
    <text evidence="1">Belongs to the protein kinase superfamily. Ser/Thr protein kinase family.</text>
</comment>
<keyword id="KW-0067">ATP-binding</keyword>
<keyword id="KW-0963">Cytoplasm</keyword>
<keyword id="KW-0418">Kinase</keyword>
<keyword id="KW-0547">Nucleotide-binding</keyword>
<keyword id="KW-0597">Phosphoprotein</keyword>
<keyword id="KW-1185">Reference proteome</keyword>
<keyword id="KW-0723">Serine/threonine-protein kinase</keyword>
<keyword id="KW-0808">Transferase</keyword>
<gene>
    <name type="primary">NNK1</name>
    <name type="ordered locus">YKL171W</name>
    <name type="ORF">YKL635</name>
</gene>
<organism>
    <name type="scientific">Saccharomyces cerevisiae (strain ATCC 204508 / S288c)</name>
    <name type="common">Baker's yeast</name>
    <dbReference type="NCBI Taxonomy" id="559292"/>
    <lineage>
        <taxon>Eukaryota</taxon>
        <taxon>Fungi</taxon>
        <taxon>Dikarya</taxon>
        <taxon>Ascomycota</taxon>
        <taxon>Saccharomycotina</taxon>
        <taxon>Saccharomycetes</taxon>
        <taxon>Saccharomycetales</taxon>
        <taxon>Saccharomycetaceae</taxon>
        <taxon>Saccharomyces</taxon>
    </lineage>
</organism>
<name>NNK1_YEAST</name>
<protein>
    <recommendedName>
        <fullName>Nitrogen network kinase 1</fullName>
        <ecNumber>2.7.11.1</ecNumber>
    </recommendedName>
</protein>
<sequence>MFTSQRQLRQNGSPMSSSRSSQHSSGTASPISDSPASNRSYGRDLRGLMGIDIPANEPAFNRANSSDTIYFRPKKIYKMEHEHPSRSTLVQLQTRSQPDDVASSQVNPEGGTDDLELGDPCGNQSLYTIGAEYVPDLDFTKLVNEWQKSTEDLYEFRSSATPQVQIKDSGKGNYELWSSPDAILTQNKLRRDSFSQENSDSLSPEDSILSRNLHSKVKPIPLPRNSQQIFTPLSNLEAERRSSYTTSSNNNSITQNNKFSFAKLKYSLPTQSSAVPASFDSNASSLNFLPTTTLSTLSELQISPNDMMDLIQKLPRNFLNLPYTQRKKVIIEHAPSHDYKAMMSLVKKFMLTSSRSNFSLAGFANNASVSQATANDDNINSRNTPNNSNDTYVNTRPLQRSRHGSIASQFLSSFSPSMTSIAKMNSNPLSGSAGGSARPDDKGMEILGHRLGKIIGFGAWGIIRECFDIETGVGRVIKIVKFKGHQNIKKHVLREVAIWRTLKHNRILPLLDWKLDDNYAMYCLTERINDGTLYDLVISWDEFKRSKIPFAERCRLTIFLSLQLLSALKYMHSKTIVHGDIKLENCLLQKEGKKSDWKVFLCDFGMSCHFDEKHVYRNDTFDENLSSGNSHRKRKSIEQTNLIKYPTTNFLPDDRTNDFDASENLKYQFENRKHQPFTPKGMVSSSSHSLKHLNQPSSSSSSNLFHKPASQPQPQHRSPFHGRHKTTDFSNLEPEPSKYIGSLPYASPELLRYSDARRSKSVEMHIYDSPDSSQSEISAASSSSSNLSSLSSSTKASAVTNSGVTTSSPSGSSTDFPCIVSPLGPASDIWALGVMLYTMLVGKLPFNHEFEPRLRSLIKVGEFDRFSLAQVCKFDRKKNEGTIGQGLYDTVIGCLTIDLDKRWKLKRIEEVLQNEMNLSEAIHDNNGS</sequence>
<evidence type="ECO:0000255" key="1">
    <source>
        <dbReference type="PROSITE-ProRule" id="PRU00159"/>
    </source>
</evidence>
<evidence type="ECO:0000255" key="2">
    <source>
        <dbReference type="PROSITE-ProRule" id="PRU10027"/>
    </source>
</evidence>
<evidence type="ECO:0000256" key="3">
    <source>
        <dbReference type="SAM" id="MobiDB-lite"/>
    </source>
</evidence>
<evidence type="ECO:0000269" key="4">
    <source>
    </source>
</evidence>
<evidence type="ECO:0000269" key="5">
    <source>
    </source>
</evidence>
<evidence type="ECO:0007744" key="6">
    <source>
    </source>
</evidence>
<evidence type="ECO:0007744" key="7">
    <source>
    </source>
</evidence>